<gene>
    <name evidence="1" type="primary">rpmA</name>
    <name type="ordered locus">Nham_0515</name>
</gene>
<name>RL27_NITHX</name>
<feature type="chain" id="PRO_1000017530" description="Large ribosomal subunit protein bL27">
    <location>
        <begin position="1"/>
        <end position="90"/>
    </location>
</feature>
<feature type="region of interest" description="Disordered" evidence="2">
    <location>
        <begin position="1"/>
        <end position="20"/>
    </location>
</feature>
<sequence>MAHKKAGGSSRNGRDSAGKRLGVKAFGGEHVIPGNIIARQRGTTWHPGLNVGMGTDHTLFAKVEGRVEFRAKAGGRTFVSVLPMTEAAAE</sequence>
<accession>Q1QQU2</accession>
<keyword id="KW-1185">Reference proteome</keyword>
<keyword id="KW-0687">Ribonucleoprotein</keyword>
<keyword id="KW-0689">Ribosomal protein</keyword>
<evidence type="ECO:0000255" key="1">
    <source>
        <dbReference type="HAMAP-Rule" id="MF_00539"/>
    </source>
</evidence>
<evidence type="ECO:0000256" key="2">
    <source>
        <dbReference type="SAM" id="MobiDB-lite"/>
    </source>
</evidence>
<evidence type="ECO:0000305" key="3"/>
<proteinExistence type="inferred from homology"/>
<dbReference type="EMBL" id="CP000319">
    <property type="protein sequence ID" value="ABE61405.1"/>
    <property type="molecule type" value="Genomic_DNA"/>
</dbReference>
<dbReference type="RefSeq" id="WP_011509109.1">
    <property type="nucleotide sequence ID" value="NC_007964.1"/>
</dbReference>
<dbReference type="SMR" id="Q1QQU2"/>
<dbReference type="STRING" id="323097.Nham_0515"/>
<dbReference type="KEGG" id="nha:Nham_0515"/>
<dbReference type="eggNOG" id="COG0211">
    <property type="taxonomic scope" value="Bacteria"/>
</dbReference>
<dbReference type="HOGENOM" id="CLU_095424_4_1_5"/>
<dbReference type="OrthoDB" id="9803474at2"/>
<dbReference type="Proteomes" id="UP000001953">
    <property type="component" value="Chromosome"/>
</dbReference>
<dbReference type="GO" id="GO:0022625">
    <property type="term" value="C:cytosolic large ribosomal subunit"/>
    <property type="evidence" value="ECO:0007669"/>
    <property type="project" value="TreeGrafter"/>
</dbReference>
<dbReference type="GO" id="GO:0003735">
    <property type="term" value="F:structural constituent of ribosome"/>
    <property type="evidence" value="ECO:0007669"/>
    <property type="project" value="InterPro"/>
</dbReference>
<dbReference type="GO" id="GO:0006412">
    <property type="term" value="P:translation"/>
    <property type="evidence" value="ECO:0007669"/>
    <property type="project" value="UniProtKB-UniRule"/>
</dbReference>
<dbReference type="FunFam" id="2.40.50.100:FF:000020">
    <property type="entry name" value="50S ribosomal protein L27"/>
    <property type="match status" value="1"/>
</dbReference>
<dbReference type="Gene3D" id="2.40.50.100">
    <property type="match status" value="1"/>
</dbReference>
<dbReference type="HAMAP" id="MF_00539">
    <property type="entry name" value="Ribosomal_bL27"/>
    <property type="match status" value="1"/>
</dbReference>
<dbReference type="InterPro" id="IPR001684">
    <property type="entry name" value="Ribosomal_bL27"/>
</dbReference>
<dbReference type="InterPro" id="IPR018261">
    <property type="entry name" value="Ribosomal_bL27_CS"/>
</dbReference>
<dbReference type="NCBIfam" id="TIGR00062">
    <property type="entry name" value="L27"/>
    <property type="match status" value="1"/>
</dbReference>
<dbReference type="PANTHER" id="PTHR15893:SF0">
    <property type="entry name" value="LARGE RIBOSOMAL SUBUNIT PROTEIN BL27M"/>
    <property type="match status" value="1"/>
</dbReference>
<dbReference type="PANTHER" id="PTHR15893">
    <property type="entry name" value="RIBOSOMAL PROTEIN L27"/>
    <property type="match status" value="1"/>
</dbReference>
<dbReference type="Pfam" id="PF01016">
    <property type="entry name" value="Ribosomal_L27"/>
    <property type="match status" value="1"/>
</dbReference>
<dbReference type="PRINTS" id="PR00063">
    <property type="entry name" value="RIBOSOMALL27"/>
</dbReference>
<dbReference type="SUPFAM" id="SSF110324">
    <property type="entry name" value="Ribosomal L27 protein-like"/>
    <property type="match status" value="1"/>
</dbReference>
<dbReference type="PROSITE" id="PS00831">
    <property type="entry name" value="RIBOSOMAL_L27"/>
    <property type="match status" value="1"/>
</dbReference>
<comment type="similarity">
    <text evidence="1">Belongs to the bacterial ribosomal protein bL27 family.</text>
</comment>
<reference key="1">
    <citation type="submission" date="2006-03" db="EMBL/GenBank/DDBJ databases">
        <title>Complete sequence of chromosome of Nitrobacter hamburgensis X14.</title>
        <authorList>
            <consortium name="US DOE Joint Genome Institute"/>
            <person name="Copeland A."/>
            <person name="Lucas S."/>
            <person name="Lapidus A."/>
            <person name="Barry K."/>
            <person name="Detter J.C."/>
            <person name="Glavina del Rio T."/>
            <person name="Hammon N."/>
            <person name="Israni S."/>
            <person name="Dalin E."/>
            <person name="Tice H."/>
            <person name="Pitluck S."/>
            <person name="Chain P."/>
            <person name="Malfatti S."/>
            <person name="Shin M."/>
            <person name="Vergez L."/>
            <person name="Schmutz J."/>
            <person name="Larimer F."/>
            <person name="Land M."/>
            <person name="Hauser L."/>
            <person name="Kyrpides N."/>
            <person name="Ivanova N."/>
            <person name="Ward B."/>
            <person name="Arp D."/>
            <person name="Klotz M."/>
            <person name="Stein L."/>
            <person name="O'Mullan G."/>
            <person name="Starkenburg S."/>
            <person name="Sayavedra L."/>
            <person name="Poret-Peterson A.T."/>
            <person name="Gentry M.E."/>
            <person name="Bruce D."/>
            <person name="Richardson P."/>
        </authorList>
    </citation>
    <scope>NUCLEOTIDE SEQUENCE [LARGE SCALE GENOMIC DNA]</scope>
    <source>
        <strain>DSM 10229 / NCIMB 13809 / X14</strain>
    </source>
</reference>
<organism>
    <name type="scientific">Nitrobacter hamburgensis (strain DSM 10229 / NCIMB 13809 / X14)</name>
    <dbReference type="NCBI Taxonomy" id="323097"/>
    <lineage>
        <taxon>Bacteria</taxon>
        <taxon>Pseudomonadati</taxon>
        <taxon>Pseudomonadota</taxon>
        <taxon>Alphaproteobacteria</taxon>
        <taxon>Hyphomicrobiales</taxon>
        <taxon>Nitrobacteraceae</taxon>
        <taxon>Nitrobacter</taxon>
    </lineage>
</organism>
<protein>
    <recommendedName>
        <fullName evidence="1">Large ribosomal subunit protein bL27</fullName>
    </recommendedName>
    <alternativeName>
        <fullName evidence="3">50S ribosomal protein L27</fullName>
    </alternativeName>
</protein>